<accession>P9WL01</accession>
<accession>L0TDQ3</accession>
<accession>P65065</accession>
<accession>P96897</accession>
<protein>
    <recommendedName>
        <fullName evidence="1">2-oxoadipate dioxygenase/decarboxylase</fullName>
        <ecNumber evidence="1">1.13.11.93</ecNumber>
    </recommendedName>
    <alternativeName>
        <fullName evidence="1">2-hydroxyglutarate synthase</fullName>
    </alternativeName>
</protein>
<keyword id="KW-0223">Dioxygenase</keyword>
<keyword id="KW-0408">Iron</keyword>
<keyword id="KW-0479">Metal-binding</keyword>
<keyword id="KW-0560">Oxidoreductase</keyword>
<keyword id="KW-1185">Reference proteome</keyword>
<gene>
    <name type="ordered locus">Rv3292</name>
    <name type="ORF">MTCY71.32</name>
</gene>
<name>HGLS_MYCTU</name>
<organism>
    <name type="scientific">Mycobacterium tuberculosis (strain ATCC 25618 / H37Rv)</name>
    <dbReference type="NCBI Taxonomy" id="83332"/>
    <lineage>
        <taxon>Bacteria</taxon>
        <taxon>Bacillati</taxon>
        <taxon>Actinomycetota</taxon>
        <taxon>Actinomycetes</taxon>
        <taxon>Mycobacteriales</taxon>
        <taxon>Mycobacteriaceae</taxon>
        <taxon>Mycobacterium</taxon>
        <taxon>Mycobacterium tuberculosis complex</taxon>
    </lineage>
</organism>
<reference key="1">
    <citation type="journal article" date="1998" name="Nature">
        <title>Deciphering the biology of Mycobacterium tuberculosis from the complete genome sequence.</title>
        <authorList>
            <person name="Cole S.T."/>
            <person name="Brosch R."/>
            <person name="Parkhill J."/>
            <person name="Garnier T."/>
            <person name="Churcher C.M."/>
            <person name="Harris D.E."/>
            <person name="Gordon S.V."/>
            <person name="Eiglmeier K."/>
            <person name="Gas S."/>
            <person name="Barry C.E. III"/>
            <person name="Tekaia F."/>
            <person name="Badcock K."/>
            <person name="Basham D."/>
            <person name="Brown D."/>
            <person name="Chillingworth T."/>
            <person name="Connor R."/>
            <person name="Davies R.M."/>
            <person name="Devlin K."/>
            <person name="Feltwell T."/>
            <person name="Gentles S."/>
            <person name="Hamlin N."/>
            <person name="Holroyd S."/>
            <person name="Hornsby T."/>
            <person name="Jagels K."/>
            <person name="Krogh A."/>
            <person name="McLean J."/>
            <person name="Moule S."/>
            <person name="Murphy L.D."/>
            <person name="Oliver S."/>
            <person name="Osborne J."/>
            <person name="Quail M.A."/>
            <person name="Rajandream M.A."/>
            <person name="Rogers J."/>
            <person name="Rutter S."/>
            <person name="Seeger K."/>
            <person name="Skelton S."/>
            <person name="Squares S."/>
            <person name="Squares R."/>
            <person name="Sulston J.E."/>
            <person name="Taylor K."/>
            <person name="Whitehead S."/>
            <person name="Barrell B.G."/>
        </authorList>
    </citation>
    <scope>NUCLEOTIDE SEQUENCE [LARGE SCALE GENOMIC DNA]</scope>
    <source>
        <strain>ATCC 25618 / H37Rv</strain>
    </source>
</reference>
<reference key="2">
    <citation type="journal article" date="2011" name="Mol. Cell. Proteomics">
        <title>Proteogenomic analysis of Mycobacterium tuberculosis by high resolution mass spectrometry.</title>
        <authorList>
            <person name="Kelkar D.S."/>
            <person name="Kumar D."/>
            <person name="Kumar P."/>
            <person name="Balakrishnan L."/>
            <person name="Muthusamy B."/>
            <person name="Yadav A.K."/>
            <person name="Shrivastava P."/>
            <person name="Marimuthu A."/>
            <person name="Anand S."/>
            <person name="Sundaram H."/>
            <person name="Kingsbury R."/>
            <person name="Harsha H.C."/>
            <person name="Nair B."/>
            <person name="Prasad T.S."/>
            <person name="Chauhan D.S."/>
            <person name="Katoch K."/>
            <person name="Katoch V.M."/>
            <person name="Kumar P."/>
            <person name="Chaerkady R."/>
            <person name="Ramachandran S."/>
            <person name="Dash D."/>
            <person name="Pandey A."/>
        </authorList>
    </citation>
    <scope>IDENTIFICATION BY MASS SPECTROMETRY [LARGE SCALE ANALYSIS]</scope>
    <source>
        <strain>ATCC 25618 / H37Rv</strain>
    </source>
</reference>
<feature type="chain" id="PRO_0000104114" description="2-oxoadipate dioxygenase/decarboxylase">
    <location>
        <begin position="1"/>
        <end position="415"/>
    </location>
</feature>
<feature type="binding site" evidence="1">
    <location>
        <position position="66"/>
    </location>
    <ligand>
        <name>2-oxoadipate</name>
        <dbReference type="ChEBI" id="CHEBI:57499"/>
    </ligand>
</feature>
<feature type="binding site" evidence="1">
    <location>
        <position position="66"/>
    </location>
    <ligand>
        <name>Fe(2+)</name>
        <dbReference type="ChEBI" id="CHEBI:29033"/>
    </ligand>
</feature>
<feature type="binding site" evidence="1">
    <location>
        <position position="70"/>
    </location>
    <ligand>
        <name>2-oxoadipate</name>
        <dbReference type="ChEBI" id="CHEBI:57499"/>
    </ligand>
</feature>
<feature type="binding site" evidence="1">
    <location>
        <position position="225"/>
    </location>
    <ligand>
        <name>2-oxoadipate</name>
        <dbReference type="ChEBI" id="CHEBI:57499"/>
    </ligand>
</feature>
<feature type="binding site" evidence="1">
    <location>
        <position position="225"/>
    </location>
    <ligand>
        <name>Fe(2+)</name>
        <dbReference type="ChEBI" id="CHEBI:29033"/>
    </ligand>
</feature>
<feature type="binding site" evidence="1">
    <location>
        <position position="296"/>
    </location>
    <ligand>
        <name>Fe(2+)</name>
        <dbReference type="ChEBI" id="CHEBI:29033"/>
    </ligand>
</feature>
<feature type="binding site" evidence="1">
    <location>
        <position position="361"/>
    </location>
    <ligand>
        <name>2-oxoadipate</name>
        <dbReference type="ChEBI" id="CHEBI:57499"/>
    </ligand>
</feature>
<feature type="site" description="Important for substrate specificity" evidence="1">
    <location>
        <position position="70"/>
    </location>
</feature>
<evidence type="ECO:0000250" key="1">
    <source>
        <dbReference type="UniProtKB" id="Q88CC1"/>
    </source>
</evidence>
<evidence type="ECO:0000305" key="2"/>
<sequence>MSRSKRLQTGQLRARFAAGLSAMYAAEVPAYGTLVEVCAQVNSDYLTRHRRAERLGSLQRVTAERHGAIRVGNPAELAAVADLFAAFGMLPVGYYDLRTAESPIPVVSTAFRPIDANELAHNPFRVFTSMLAIEDRRYFDADLRTRVQTFLARRQLFDPALLAQARAIAADGGCDADDAPAFVAAAVAAFALSREPVEKSWYDELSRVSAVAADIAGVGSTHINHLTPRVLDIDDLYRRMTERGITMIDTIQGPPRTDGPDVLLRQTSFRALAEPRMFRDEDGTVTPGILRVRFGEVEARGVALTPRGRERYEAAMAAADPAAVWATHFPSTDAEMAAQGLAYYRGGDPSAPIVYEDFLPASAAGIFRSNLDRDSQTGDGPDDAGYNVDWLAGAIGRHIHDPYALYDALAQEERR</sequence>
<proteinExistence type="evidence at protein level"/>
<comment type="function">
    <text evidence="1">Catalyzes the decarboxylation and hydroxylation of 2-oxoadipate (2OA) to form D-2-hydroxyglutarate (D-2-HGA).</text>
</comment>
<comment type="catalytic activity">
    <reaction evidence="1">
        <text>2-oxoadipate + O2 = (R)-2-hydroxyglutarate + CO2</text>
        <dbReference type="Rhea" id="RHEA:71787"/>
        <dbReference type="ChEBI" id="CHEBI:15379"/>
        <dbReference type="ChEBI" id="CHEBI:15801"/>
        <dbReference type="ChEBI" id="CHEBI:16526"/>
        <dbReference type="ChEBI" id="CHEBI:57499"/>
        <dbReference type="EC" id="1.13.11.93"/>
    </reaction>
</comment>
<comment type="cofactor">
    <cofactor evidence="1">
        <name>Fe(2+)</name>
        <dbReference type="ChEBI" id="CHEBI:29033"/>
    </cofactor>
</comment>
<comment type="similarity">
    <text evidence="2">Belongs to the 2-oxoadipate dioxygenase/decarboxylase family.</text>
</comment>
<dbReference type="EC" id="1.13.11.93" evidence="1"/>
<dbReference type="EMBL" id="AL123456">
    <property type="protein sequence ID" value="CCP46111.1"/>
    <property type="molecule type" value="Genomic_DNA"/>
</dbReference>
<dbReference type="PIR" id="E70981">
    <property type="entry name" value="E70981"/>
</dbReference>
<dbReference type="RefSeq" id="NP_217809.1">
    <property type="nucleotide sequence ID" value="NC_000962.3"/>
</dbReference>
<dbReference type="RefSeq" id="WP_003417184.1">
    <property type="nucleotide sequence ID" value="NZ_NVQJ01000003.1"/>
</dbReference>
<dbReference type="SMR" id="P9WL01"/>
<dbReference type="STRING" id="83332.Rv3292"/>
<dbReference type="PaxDb" id="83332-Rv3292"/>
<dbReference type="DNASU" id="888734"/>
<dbReference type="GeneID" id="888734"/>
<dbReference type="KEGG" id="mtu:Rv3292"/>
<dbReference type="KEGG" id="mtv:RVBD_3292"/>
<dbReference type="TubercuList" id="Rv3292"/>
<dbReference type="eggNOG" id="COG5383">
    <property type="taxonomic scope" value="Bacteria"/>
</dbReference>
<dbReference type="InParanoid" id="P9WL01"/>
<dbReference type="OrthoDB" id="4394119at2"/>
<dbReference type="PhylomeDB" id="P9WL01"/>
<dbReference type="Proteomes" id="UP000001584">
    <property type="component" value="Chromosome"/>
</dbReference>
<dbReference type="GO" id="GO:0051213">
    <property type="term" value="F:dioxygenase activity"/>
    <property type="evidence" value="ECO:0007669"/>
    <property type="project" value="UniProtKB-KW"/>
</dbReference>
<dbReference type="GO" id="GO:0046872">
    <property type="term" value="F:metal ion binding"/>
    <property type="evidence" value="ECO:0007669"/>
    <property type="project" value="UniProtKB-KW"/>
</dbReference>
<dbReference type="CDD" id="cd16348">
    <property type="entry name" value="VOC_YdcJ_like"/>
    <property type="match status" value="1"/>
</dbReference>
<dbReference type="Gene3D" id="3.10.180.80">
    <property type="entry name" value="Uncharacterised protein PF07063, DUF1338"/>
    <property type="match status" value="1"/>
</dbReference>
<dbReference type="InterPro" id="IPR009770">
    <property type="entry name" value="HGLS"/>
</dbReference>
<dbReference type="InterPro" id="IPR047869">
    <property type="entry name" value="YdcJ_bac-like"/>
</dbReference>
<dbReference type="PANTHER" id="PTHR39479">
    <property type="match status" value="1"/>
</dbReference>
<dbReference type="PANTHER" id="PTHR39479:SF2">
    <property type="entry name" value="2-OXOADIPATE DIOXYGENASE_DECARBOXYLASE"/>
    <property type="match status" value="1"/>
</dbReference>
<dbReference type="Pfam" id="PF07063">
    <property type="entry name" value="HGLS"/>
    <property type="match status" value="1"/>
</dbReference>
<dbReference type="SMART" id="SM01150">
    <property type="entry name" value="DUF1338"/>
    <property type="match status" value="1"/>
</dbReference>